<dbReference type="EMBL" id="AB018119">
    <property type="protein sequence ID" value="BAA97274.1"/>
    <property type="status" value="ALT_SEQ"/>
    <property type="molecule type" value="Genomic_DNA"/>
</dbReference>
<dbReference type="EMBL" id="CP002688">
    <property type="protein sequence ID" value="AED98251.1"/>
    <property type="molecule type" value="Genomic_DNA"/>
</dbReference>
<dbReference type="EMBL" id="AF428338">
    <property type="protein sequence ID" value="AAL16268.1"/>
    <property type="molecule type" value="mRNA"/>
</dbReference>
<dbReference type="EMBL" id="AY034944">
    <property type="protein sequence ID" value="AAK59450.1"/>
    <property type="molecule type" value="mRNA"/>
</dbReference>
<dbReference type="EMBL" id="AY150381">
    <property type="protein sequence ID" value="AAN12926.1"/>
    <property type="molecule type" value="mRNA"/>
</dbReference>
<dbReference type="EMBL" id="AY085807">
    <property type="protein sequence ID" value="AAM63023.1"/>
    <property type="molecule type" value="mRNA"/>
</dbReference>
<dbReference type="RefSeq" id="NP_569038.1">
    <property type="nucleotide sequence ID" value="NM_126066.4"/>
</dbReference>
<dbReference type="SMR" id="Q944K2"/>
<dbReference type="BioGRID" id="22043">
    <property type="interactions" value="46"/>
</dbReference>
<dbReference type="FunCoup" id="Q944K2">
    <property type="interactions" value="4813"/>
</dbReference>
<dbReference type="IntAct" id="Q944K2">
    <property type="interactions" value="20"/>
</dbReference>
<dbReference type="STRING" id="3702.Q944K2"/>
<dbReference type="iPTMnet" id="Q944K2"/>
<dbReference type="SwissPalm" id="Q944K2"/>
<dbReference type="PaxDb" id="3702-AT5G66680.1"/>
<dbReference type="ProteomicsDB" id="248831"/>
<dbReference type="EnsemblPlants" id="AT5G66680.1">
    <property type="protein sequence ID" value="AT5G66680.1"/>
    <property type="gene ID" value="AT5G66680"/>
</dbReference>
<dbReference type="GeneID" id="836801"/>
<dbReference type="Gramene" id="AT5G66680.1">
    <property type="protein sequence ID" value="AT5G66680.1"/>
    <property type="gene ID" value="AT5G66680"/>
</dbReference>
<dbReference type="KEGG" id="ath:AT5G66680"/>
<dbReference type="Araport" id="AT5G66680"/>
<dbReference type="TAIR" id="AT5G66680">
    <property type="gene designation" value="DGL1"/>
</dbReference>
<dbReference type="eggNOG" id="KOG2754">
    <property type="taxonomic scope" value="Eukaryota"/>
</dbReference>
<dbReference type="HOGENOM" id="CLU_031804_0_0_1"/>
<dbReference type="InParanoid" id="Q944K2"/>
<dbReference type="OMA" id="NIATECG"/>
<dbReference type="OrthoDB" id="29105at2759"/>
<dbReference type="PhylomeDB" id="Q944K2"/>
<dbReference type="UniPathway" id="UPA00378"/>
<dbReference type="CD-CODE" id="4299E36E">
    <property type="entry name" value="Nucleolus"/>
</dbReference>
<dbReference type="PRO" id="PR:Q944K2"/>
<dbReference type="Proteomes" id="UP000006548">
    <property type="component" value="Chromosome 5"/>
</dbReference>
<dbReference type="ExpressionAtlas" id="Q944K2">
    <property type="expression patterns" value="baseline and differential"/>
</dbReference>
<dbReference type="GO" id="GO:0005783">
    <property type="term" value="C:endoplasmic reticulum"/>
    <property type="evidence" value="ECO:0007005"/>
    <property type="project" value="TAIR"/>
</dbReference>
<dbReference type="GO" id="GO:0005794">
    <property type="term" value="C:Golgi apparatus"/>
    <property type="evidence" value="ECO:0007005"/>
    <property type="project" value="TAIR"/>
</dbReference>
<dbReference type="GO" id="GO:0005730">
    <property type="term" value="C:nucleolus"/>
    <property type="evidence" value="ECO:0007005"/>
    <property type="project" value="TAIR"/>
</dbReference>
<dbReference type="GO" id="GO:0008250">
    <property type="term" value="C:oligosaccharyltransferase complex"/>
    <property type="evidence" value="ECO:0000250"/>
    <property type="project" value="TAIR"/>
</dbReference>
<dbReference type="GO" id="GO:0009505">
    <property type="term" value="C:plant-type cell wall"/>
    <property type="evidence" value="ECO:0007005"/>
    <property type="project" value="TAIR"/>
</dbReference>
<dbReference type="GO" id="GO:0000325">
    <property type="term" value="C:plant-type vacuole"/>
    <property type="evidence" value="ECO:0007005"/>
    <property type="project" value="TAIR"/>
</dbReference>
<dbReference type="GO" id="GO:0009506">
    <property type="term" value="C:plasmodesma"/>
    <property type="evidence" value="ECO:0007005"/>
    <property type="project" value="TAIR"/>
</dbReference>
<dbReference type="GO" id="GO:0009536">
    <property type="term" value="C:plastid"/>
    <property type="evidence" value="ECO:0007005"/>
    <property type="project" value="TAIR"/>
</dbReference>
<dbReference type="GO" id="GO:0009664">
    <property type="term" value="P:plant-type cell wall organization"/>
    <property type="evidence" value="ECO:0000315"/>
    <property type="project" value="TAIR"/>
</dbReference>
<dbReference type="GO" id="GO:0018279">
    <property type="term" value="P:protein N-linked glycosylation via asparagine"/>
    <property type="evidence" value="ECO:0000315"/>
    <property type="project" value="TAIR"/>
</dbReference>
<dbReference type="GO" id="GO:0009826">
    <property type="term" value="P:unidimensional cell growth"/>
    <property type="evidence" value="ECO:0000315"/>
    <property type="project" value="TAIR"/>
</dbReference>
<dbReference type="InterPro" id="IPR005013">
    <property type="entry name" value="DDOST_48_kDa_subunit"/>
</dbReference>
<dbReference type="InterPro" id="IPR055459">
    <property type="entry name" value="OST48_MD"/>
</dbReference>
<dbReference type="InterPro" id="IPR055457">
    <property type="entry name" value="OST48_N"/>
</dbReference>
<dbReference type="PANTHER" id="PTHR10830">
    <property type="entry name" value="DOLICHYL-DIPHOSPHOOLIGOSACCHARIDE--PROTEIN GLYCOSYLTRANSFERASE 48 KDA SUBUNIT"/>
    <property type="match status" value="1"/>
</dbReference>
<dbReference type="PANTHER" id="PTHR10830:SF5">
    <property type="entry name" value="DOLICHYL-DIPHOSPHOOLIGOSACCHARIDE--PROTEIN GLYCOSYLTRANSFERASE 48 KDA SUBUNIT"/>
    <property type="match status" value="1"/>
</dbReference>
<dbReference type="Pfam" id="PF23358">
    <property type="entry name" value="OST48_MD"/>
    <property type="match status" value="1"/>
</dbReference>
<dbReference type="Pfam" id="PF03345">
    <property type="entry name" value="OST48_N"/>
    <property type="match status" value="1"/>
</dbReference>
<keyword id="KW-0256">Endoplasmic reticulum</keyword>
<keyword id="KW-0472">Membrane</keyword>
<keyword id="KW-1185">Reference proteome</keyword>
<keyword id="KW-0732">Signal</keyword>
<keyword id="KW-0812">Transmembrane</keyword>
<keyword id="KW-1133">Transmembrane helix</keyword>
<accession>Q944K2</accession>
<accession>Q8LDT6</accession>
<accession>Q94CD6</accession>
<accession>Q9LVR2</accession>
<reference key="1">
    <citation type="journal article" date="2000" name="DNA Res.">
        <title>Structural analysis of Arabidopsis thaliana chromosome 5. X. Sequence features of the regions of 3,076,755 bp covered by sixty P1 and TAC clones.</title>
        <authorList>
            <person name="Sato S."/>
            <person name="Nakamura Y."/>
            <person name="Kaneko T."/>
            <person name="Katoh T."/>
            <person name="Asamizu E."/>
            <person name="Kotani H."/>
            <person name="Tabata S."/>
        </authorList>
    </citation>
    <scope>NUCLEOTIDE SEQUENCE [LARGE SCALE GENOMIC DNA]</scope>
    <source>
        <strain>cv. Columbia</strain>
    </source>
</reference>
<reference key="2">
    <citation type="journal article" date="2017" name="Plant J.">
        <title>Araport11: a complete reannotation of the Arabidopsis thaliana reference genome.</title>
        <authorList>
            <person name="Cheng C.Y."/>
            <person name="Krishnakumar V."/>
            <person name="Chan A.P."/>
            <person name="Thibaud-Nissen F."/>
            <person name="Schobel S."/>
            <person name="Town C.D."/>
        </authorList>
    </citation>
    <scope>GENOME REANNOTATION</scope>
    <source>
        <strain>cv. Columbia</strain>
    </source>
</reference>
<reference key="3">
    <citation type="journal article" date="2003" name="Science">
        <title>Empirical analysis of transcriptional activity in the Arabidopsis genome.</title>
        <authorList>
            <person name="Yamada K."/>
            <person name="Lim J."/>
            <person name="Dale J.M."/>
            <person name="Chen H."/>
            <person name="Shinn P."/>
            <person name="Palm C.J."/>
            <person name="Southwick A.M."/>
            <person name="Wu H.C."/>
            <person name="Kim C.J."/>
            <person name="Nguyen M."/>
            <person name="Pham P.K."/>
            <person name="Cheuk R.F."/>
            <person name="Karlin-Newmann G."/>
            <person name="Liu S.X."/>
            <person name="Lam B."/>
            <person name="Sakano H."/>
            <person name="Wu T."/>
            <person name="Yu G."/>
            <person name="Miranda M."/>
            <person name="Quach H.L."/>
            <person name="Tripp M."/>
            <person name="Chang C.H."/>
            <person name="Lee J.M."/>
            <person name="Toriumi M.J."/>
            <person name="Chan M.M."/>
            <person name="Tang C.C."/>
            <person name="Onodera C.S."/>
            <person name="Deng J.M."/>
            <person name="Akiyama K."/>
            <person name="Ansari Y."/>
            <person name="Arakawa T."/>
            <person name="Banh J."/>
            <person name="Banno F."/>
            <person name="Bowser L."/>
            <person name="Brooks S.Y."/>
            <person name="Carninci P."/>
            <person name="Chao Q."/>
            <person name="Choy N."/>
            <person name="Enju A."/>
            <person name="Goldsmith A.D."/>
            <person name="Gurjal M."/>
            <person name="Hansen N.F."/>
            <person name="Hayashizaki Y."/>
            <person name="Johnson-Hopson C."/>
            <person name="Hsuan V.W."/>
            <person name="Iida K."/>
            <person name="Karnes M."/>
            <person name="Khan S."/>
            <person name="Koesema E."/>
            <person name="Ishida J."/>
            <person name="Jiang P.X."/>
            <person name="Jones T."/>
            <person name="Kawai J."/>
            <person name="Kamiya A."/>
            <person name="Meyers C."/>
            <person name="Nakajima M."/>
            <person name="Narusaka M."/>
            <person name="Seki M."/>
            <person name="Sakurai T."/>
            <person name="Satou M."/>
            <person name="Tamse R."/>
            <person name="Vaysberg M."/>
            <person name="Wallender E.K."/>
            <person name="Wong C."/>
            <person name="Yamamura Y."/>
            <person name="Yuan S."/>
            <person name="Shinozaki K."/>
            <person name="Davis R.W."/>
            <person name="Theologis A."/>
            <person name="Ecker J.R."/>
        </authorList>
    </citation>
    <scope>NUCLEOTIDE SEQUENCE [LARGE SCALE MRNA]</scope>
    <source>
        <strain>cv. Columbia</strain>
    </source>
</reference>
<reference key="4">
    <citation type="submission" date="2002-03" db="EMBL/GenBank/DDBJ databases">
        <title>Full-length cDNA from Arabidopsis thaliana.</title>
        <authorList>
            <person name="Brover V.V."/>
            <person name="Troukhan M.E."/>
            <person name="Alexandrov N.A."/>
            <person name="Lu Y.-P."/>
            <person name="Flavell R.B."/>
            <person name="Feldmann K.A."/>
        </authorList>
    </citation>
    <scope>NUCLEOTIDE SEQUENCE [LARGE SCALE MRNA]</scope>
</reference>
<reference key="5">
    <citation type="journal article" date="2005" name="Plant J.">
        <title>Mutants in DEFECTIVE GLYCOSYLATION, an Arabidopsis homolog of an oligosaccharyltransferase complex subunit, show protein underglycosylation and defects in cell differentiation and growth.</title>
        <authorList>
            <person name="Lerouxel O."/>
            <person name="Mouille G."/>
            <person name="Andeme-Onzighi C."/>
            <person name="Bruyant M.P."/>
            <person name="Seveno M."/>
            <person name="Loutelier-Bourhis C."/>
            <person name="Driouich A."/>
            <person name="Hoefte H."/>
            <person name="Lerouge P."/>
        </authorList>
    </citation>
    <scope>DISRUPTION PHENOTYPE</scope>
    <scope>FUNCTION</scope>
</reference>
<feature type="signal peptide" evidence="3">
    <location>
        <begin position="1"/>
        <end position="24"/>
    </location>
</feature>
<feature type="chain" id="PRO_0000420813" description="Dolichyl-diphosphooligosaccharide--protein glycosyltransferase 48 kDa subunit">
    <location>
        <begin position="25"/>
        <end position="437"/>
    </location>
</feature>
<feature type="topological domain" description="Lumenal" evidence="3">
    <location>
        <begin position="25"/>
        <end position="414"/>
    </location>
</feature>
<feature type="transmembrane region" description="Helical" evidence="3">
    <location>
        <begin position="415"/>
        <end position="435"/>
    </location>
</feature>
<feature type="topological domain" description="Cytoplasmic" evidence="3">
    <location>
        <begin position="436"/>
        <end position="437"/>
    </location>
</feature>
<feature type="sequence conflict" description="In Ref. 4; AAM63023." evidence="5" ref="4">
    <original>S</original>
    <variation>I</variation>
    <location>
        <position position="265"/>
    </location>
</feature>
<feature type="sequence conflict" description="In Ref. 3; AAK59450." evidence="5" ref="3">
    <original>D</original>
    <variation>G</variation>
    <location>
        <position position="338"/>
    </location>
</feature>
<protein>
    <recommendedName>
        <fullName>Dolichyl-diphosphooligosaccharide--protein glycosyltransferase 48 kDa subunit</fullName>
        <shortName>Oligosaccharyl transferase 48 kDa subunit</shortName>
    </recommendedName>
    <alternativeName>
        <fullName>Protein DEFECTIVE GLYCOSYLATION 1</fullName>
    </alternativeName>
</protein>
<gene>
    <name type="primary">OST48</name>
    <name type="synonym">DGL1</name>
    <name type="ordered locus">At5g66680</name>
    <name type="ORF">MSN2.7</name>
</gene>
<evidence type="ECO:0000250" key="1"/>
<evidence type="ECO:0000250" key="2">
    <source>
        <dbReference type="UniProtKB" id="P33767"/>
    </source>
</evidence>
<evidence type="ECO:0000255" key="3"/>
<evidence type="ECO:0000269" key="4">
    <source>
    </source>
</evidence>
<evidence type="ECO:0000305" key="5"/>
<comment type="function">
    <text evidence="2 4">Subunit of the oligosaccharyl transferase (OST) complex that catalyzes the initial transfer of a defined glycan (Glc(3)Man(9)GlcNAc(2) in eukaryotes) from the lipid carrier dolichol-pyrophosphate to an asparagine residue within an Asn-X-Ser/Thr consensus motif in nascent polypeptide chains, the first step in protein N-glycosylation (PubMed:15860005). N-glycosylation occurs cotranslationally and the complex associates with the Sec61 complex at the channel-forming translocon complex that mediates protein translocation across the endoplasmic reticulum (ER). All subunits are required for a maximal enzyme activity (By similarity).</text>
</comment>
<comment type="pathway">
    <text>Protein modification; protein glycosylation.</text>
</comment>
<comment type="subunit">
    <text evidence="2">Component of the oligosaccharyltransferase (OST) complex.</text>
</comment>
<comment type="subcellular location">
    <subcellularLocation>
        <location evidence="1">Endoplasmic reticulum membrane</location>
        <topology evidence="1">Single-pass type I membrane protein</topology>
    </subcellularLocation>
</comment>
<comment type="disruption phenotype">
    <text evidence="4">Embryo-lethal.</text>
</comment>
<comment type="similarity">
    <text evidence="5">Belongs to the DDOST 48 kDa subunit family.</text>
</comment>
<comment type="sequence caution" evidence="5">
    <conflict type="erroneous gene model prediction">
        <sequence resource="EMBL-CDS" id="BAA97274"/>
    </conflict>
</comment>
<proteinExistence type="evidence at transcript level"/>
<organism>
    <name type="scientific">Arabidopsis thaliana</name>
    <name type="common">Mouse-ear cress</name>
    <dbReference type="NCBI Taxonomy" id="3702"/>
    <lineage>
        <taxon>Eukaryota</taxon>
        <taxon>Viridiplantae</taxon>
        <taxon>Streptophyta</taxon>
        <taxon>Embryophyta</taxon>
        <taxon>Tracheophyta</taxon>
        <taxon>Spermatophyta</taxon>
        <taxon>Magnoliopsida</taxon>
        <taxon>eudicotyledons</taxon>
        <taxon>Gunneridae</taxon>
        <taxon>Pentapetalae</taxon>
        <taxon>rosids</taxon>
        <taxon>malvids</taxon>
        <taxon>Brassicales</taxon>
        <taxon>Brassicaceae</taxon>
        <taxon>Camelineae</taxon>
        <taxon>Arabidopsis</taxon>
    </lineage>
</organism>
<name>OST48_ARATH</name>
<sequence length="437" mass="48744">MVNLSRSVALISVFLLPLLSFSFSVDNPTDRRVLVLLDDLSLKSSHSIFFNTLKSRGFDLDFKLAEDSKLALQRYGQYLYDGLIIFAPSTERFGGSLDSKSIADFVDSGRDLILSADTAASDLIRGIATECGVDFDEDSSAMVIDHTSFSVSDVDGDHTLIAADDLVKSDVILGKTKIEAPVLFRGVAHSLNPTNNLVLKVLSASPSAYSANPSSKLSSPPQLTGSSISLVSVMQARNNARVVISGSVQLFSDRLIRSGVQKAGSPNQYEKSGNEQFVTELSKWVFHERGHLKAGNLVHHRVGETDEPAIYRIKDDLEFSVEIYEWSGKSWEPYVANDVQVQFYMMSPYVLKTLSTDKKGLFHTSFKVPDVYGVFQFKVEYEKLGYTTLSLSKQIPVRPYRHNEYERFIPTAYPYYGACFTTMAGFFVFSFVYLYHK</sequence>